<dbReference type="EC" id="2.4.1.16" evidence="11"/>
<dbReference type="EMBL" id="CP003820">
    <property type="protein sequence ID" value="AFR92678.2"/>
    <property type="molecule type" value="Genomic_DNA"/>
</dbReference>
<dbReference type="RefSeq" id="XP_012046345.1">
    <property type="nucleotide sequence ID" value="XM_012190955.1"/>
</dbReference>
<dbReference type="GlyCosmos" id="J9VF17">
    <property type="glycosylation" value="5 sites, No reported glycans"/>
</dbReference>
<dbReference type="GeneID" id="23884344"/>
<dbReference type="KEGG" id="cng:CNAG_00546"/>
<dbReference type="VEuPathDB" id="FungiDB:CNAG_00546"/>
<dbReference type="HOGENOM" id="CLU_002572_0_1_1"/>
<dbReference type="OrthoDB" id="4424at5206"/>
<dbReference type="Proteomes" id="UP000010091">
    <property type="component" value="Chromosome 1"/>
</dbReference>
<dbReference type="GO" id="GO:0030428">
    <property type="term" value="C:cell septum"/>
    <property type="evidence" value="ECO:0007669"/>
    <property type="project" value="TreeGrafter"/>
</dbReference>
<dbReference type="GO" id="GO:0005886">
    <property type="term" value="C:plasma membrane"/>
    <property type="evidence" value="ECO:0007669"/>
    <property type="project" value="UniProtKB-SubCell"/>
</dbReference>
<dbReference type="GO" id="GO:0004100">
    <property type="term" value="F:chitin synthase activity"/>
    <property type="evidence" value="ECO:0000315"/>
    <property type="project" value="UniProtKB"/>
</dbReference>
<dbReference type="GO" id="GO:0006031">
    <property type="term" value="P:chitin biosynthetic process"/>
    <property type="evidence" value="ECO:0000315"/>
    <property type="project" value="UniProtKB"/>
</dbReference>
<dbReference type="GO" id="GO:0031505">
    <property type="term" value="P:fungal-type cell wall organization"/>
    <property type="evidence" value="ECO:0007669"/>
    <property type="project" value="TreeGrafter"/>
</dbReference>
<dbReference type="FunFam" id="1.10.10.60:FF:000631">
    <property type="entry name" value="Chitin synthase 6"/>
    <property type="match status" value="1"/>
</dbReference>
<dbReference type="FunFam" id="3.10.120.10:FF:000014">
    <property type="entry name" value="Chitin synthase 6"/>
    <property type="match status" value="1"/>
</dbReference>
<dbReference type="Gene3D" id="3.10.120.10">
    <property type="entry name" value="Cytochrome b5-like heme/steroid binding domain"/>
    <property type="match status" value="1"/>
</dbReference>
<dbReference type="Gene3D" id="1.10.10.60">
    <property type="entry name" value="Homeodomain-like"/>
    <property type="match status" value="1"/>
</dbReference>
<dbReference type="InterPro" id="IPR004835">
    <property type="entry name" value="Chitin_synth"/>
</dbReference>
<dbReference type="InterPro" id="IPR001199">
    <property type="entry name" value="Cyt_B5-like_heme/steroid-bd"/>
</dbReference>
<dbReference type="InterPro" id="IPR036400">
    <property type="entry name" value="Cyt_B5-like_heme/steroid_sf"/>
</dbReference>
<dbReference type="InterPro" id="IPR014876">
    <property type="entry name" value="DEK_C"/>
</dbReference>
<dbReference type="InterPro" id="IPR029044">
    <property type="entry name" value="Nucleotide-diphossugar_trans"/>
</dbReference>
<dbReference type="PANTHER" id="PTHR22914">
    <property type="entry name" value="CHITIN SYNTHASE"/>
    <property type="match status" value="1"/>
</dbReference>
<dbReference type="PANTHER" id="PTHR22914:SF13">
    <property type="entry name" value="CHITIN SYNTHASE"/>
    <property type="match status" value="1"/>
</dbReference>
<dbReference type="Pfam" id="PF03142">
    <property type="entry name" value="Chitin_synth_2"/>
    <property type="match status" value="1"/>
</dbReference>
<dbReference type="Pfam" id="PF00173">
    <property type="entry name" value="Cyt-b5"/>
    <property type="match status" value="1"/>
</dbReference>
<dbReference type="Pfam" id="PF08766">
    <property type="entry name" value="DEK_C"/>
    <property type="match status" value="1"/>
</dbReference>
<dbReference type="SMART" id="SM01117">
    <property type="entry name" value="Cyt-b5"/>
    <property type="match status" value="2"/>
</dbReference>
<dbReference type="SUPFAM" id="SSF55856">
    <property type="entry name" value="Cytochrome b5-like heme/steroid binding domain"/>
    <property type="match status" value="1"/>
</dbReference>
<dbReference type="SUPFAM" id="SSF109715">
    <property type="entry name" value="DEK C-terminal domain"/>
    <property type="match status" value="1"/>
</dbReference>
<dbReference type="SUPFAM" id="SSF53448">
    <property type="entry name" value="Nucleotide-diphospho-sugar transferases"/>
    <property type="match status" value="1"/>
</dbReference>
<dbReference type="PROSITE" id="PS51998">
    <property type="entry name" value="DEK_C"/>
    <property type="match status" value="1"/>
</dbReference>
<organism>
    <name type="scientific">Cryptococcus neoformans var. grubii serotype A (strain H99 / ATCC 208821 / CBS 10515 / FGSC 9487)</name>
    <name type="common">Filobasidiella neoformans var. grubii</name>
    <dbReference type="NCBI Taxonomy" id="235443"/>
    <lineage>
        <taxon>Eukaryota</taxon>
        <taxon>Fungi</taxon>
        <taxon>Dikarya</taxon>
        <taxon>Basidiomycota</taxon>
        <taxon>Agaricomycotina</taxon>
        <taxon>Tremellomycetes</taxon>
        <taxon>Tremellales</taxon>
        <taxon>Cryptococcaceae</taxon>
        <taxon>Cryptococcus</taxon>
        <taxon>Cryptococcus neoformans species complex</taxon>
    </lineage>
</organism>
<gene>
    <name evidence="9" type="primary">CHS4</name>
    <name type="ORF">CNAG_00546</name>
</gene>
<reference key="1">
    <citation type="journal article" date="2014" name="PLoS Genet.">
        <title>Analysis of the genome and transcriptome of Cryptococcus neoformans var. grubii reveals complex RNA expression and microevolution leading to virulence attenuation.</title>
        <authorList>
            <person name="Janbon G."/>
            <person name="Ormerod K.L."/>
            <person name="Paulet D."/>
            <person name="Byrnes E.J. III"/>
            <person name="Yadav V."/>
            <person name="Chatterjee G."/>
            <person name="Mullapudi N."/>
            <person name="Hon C.-C."/>
            <person name="Billmyre R.B."/>
            <person name="Brunel F."/>
            <person name="Bahn Y.-S."/>
            <person name="Chen W."/>
            <person name="Chen Y."/>
            <person name="Chow E.W.L."/>
            <person name="Coppee J.-Y."/>
            <person name="Floyd-Averette A."/>
            <person name="Gaillardin C."/>
            <person name="Gerik K.J."/>
            <person name="Goldberg J."/>
            <person name="Gonzalez-Hilarion S."/>
            <person name="Gujja S."/>
            <person name="Hamlin J.L."/>
            <person name="Hsueh Y.-P."/>
            <person name="Ianiri G."/>
            <person name="Jones S."/>
            <person name="Kodira C.D."/>
            <person name="Kozubowski L."/>
            <person name="Lam W."/>
            <person name="Marra M."/>
            <person name="Mesner L.D."/>
            <person name="Mieczkowski P.A."/>
            <person name="Moyrand F."/>
            <person name="Nielsen K."/>
            <person name="Proux C."/>
            <person name="Rossignol T."/>
            <person name="Schein J.E."/>
            <person name="Sun S."/>
            <person name="Wollschlaeger C."/>
            <person name="Wood I.A."/>
            <person name="Zeng Q."/>
            <person name="Neuveglise C."/>
            <person name="Newlon C.S."/>
            <person name="Perfect J.R."/>
            <person name="Lodge J.K."/>
            <person name="Idnurm A."/>
            <person name="Stajich J.E."/>
            <person name="Kronstad J.W."/>
            <person name="Sanyal K."/>
            <person name="Heitman J."/>
            <person name="Fraser J.A."/>
            <person name="Cuomo C.A."/>
            <person name="Dietrich F.S."/>
        </authorList>
    </citation>
    <scope>NUCLEOTIDE SEQUENCE [LARGE SCALE GENOMIC DNA]</scope>
    <source>
        <strain>H99 / ATCC 208821 / CBS 10515 / FGSC 9487</strain>
    </source>
</reference>
<reference key="2">
    <citation type="journal article" date="2005" name="Eukaryot. Cell">
        <title>A chitin synthase and its regulator protein are critical for chitosan production and growth of the fungal pathogen Cryptococcus neoformans.</title>
        <authorList>
            <person name="Banks I.R."/>
            <person name="Specht C.A."/>
            <person name="Donlin M.J."/>
            <person name="Gerik K.J."/>
            <person name="Levitz S.M."/>
            <person name="Lodge J.K."/>
        </authorList>
    </citation>
    <scope>FUNCTION</scope>
    <scope>DISRUPTION PHENOTYPE</scope>
</reference>
<reference key="3">
    <citation type="journal article" date="2018" name="Cell Surf.">
        <title>Lack of chitin synthase genes impacts capsular architecture and cellular physiology in Cryptococcus neoformans.</title>
        <authorList>
            <person name="Rodrigues J."/>
            <person name="Ramos C.L."/>
            <person name="Frases S."/>
            <person name="Godinho R.M.D.C."/>
            <person name="Fonseca F.L."/>
            <person name="Rodrigues M.L."/>
        </authorList>
    </citation>
    <scope>DISRUPTION PHENOTYPE</scope>
</reference>
<reference key="4">
    <citation type="journal article" date="2019" name="Genetics">
        <title>Roles for Stress Response and Cell Wall Biosynthesis Pathways in Caspofungin Tolerance in Cryptococcus neoformans.</title>
        <authorList>
            <person name="Pianalto K.M."/>
            <person name="Billmyre R.B."/>
            <person name="Telzrow C.L."/>
            <person name="Alspaugh J.A."/>
        </authorList>
    </citation>
    <scope>INDUCTION</scope>
</reference>
<feature type="chain" id="PRO_0000451813" description="Chitin synthase 4">
    <location>
        <begin position="1"/>
        <end position="1271"/>
    </location>
</feature>
<feature type="transmembrane region" description="Helical" evidence="2">
    <location>
        <begin position="165"/>
        <end position="185"/>
    </location>
</feature>
<feature type="transmembrane region" description="Helical" evidence="2">
    <location>
        <begin position="201"/>
        <end position="221"/>
    </location>
</feature>
<feature type="transmembrane region" description="Helical" evidence="2">
    <location>
        <begin position="473"/>
        <end position="493"/>
    </location>
</feature>
<feature type="transmembrane region" description="Helical" evidence="2">
    <location>
        <begin position="867"/>
        <end position="887"/>
    </location>
</feature>
<feature type="transmembrane region" description="Helical" evidence="2">
    <location>
        <begin position="894"/>
        <end position="914"/>
    </location>
</feature>
<feature type="transmembrane region" description="Helical" evidence="2">
    <location>
        <begin position="919"/>
        <end position="939"/>
    </location>
</feature>
<feature type="domain" description="DEK-C" evidence="4">
    <location>
        <begin position="1213"/>
        <end position="1269"/>
    </location>
</feature>
<feature type="region of interest" description="Disordered" evidence="5">
    <location>
        <begin position="1"/>
        <end position="45"/>
    </location>
</feature>
<feature type="region of interest" description="Disordered" evidence="5">
    <location>
        <begin position="58"/>
        <end position="117"/>
    </location>
</feature>
<feature type="region of interest" description="Disordered" evidence="5">
    <location>
        <begin position="999"/>
        <end position="1081"/>
    </location>
</feature>
<feature type="compositionally biased region" description="Polar residues" evidence="5">
    <location>
        <begin position="21"/>
        <end position="30"/>
    </location>
</feature>
<feature type="compositionally biased region" description="Polar residues" evidence="5">
    <location>
        <begin position="1027"/>
        <end position="1037"/>
    </location>
</feature>
<feature type="glycosylation site" description="N-linked (GlcNAc...) asparagine" evidence="3">
    <location>
        <position position="407"/>
    </location>
</feature>
<feature type="glycosylation site" description="N-linked (GlcNAc...) asparagine" evidence="3">
    <location>
        <position position="713"/>
    </location>
</feature>
<feature type="glycosylation site" description="N-linked (GlcNAc...) asparagine" evidence="3">
    <location>
        <position position="836"/>
    </location>
</feature>
<feature type="glycosylation site" description="N-linked (GlcNAc...) asparagine" evidence="3">
    <location>
        <position position="1055"/>
    </location>
</feature>
<feature type="glycosylation site" description="N-linked (GlcNAc...) asparagine" evidence="3">
    <location>
        <position position="1161"/>
    </location>
</feature>
<proteinExistence type="evidence at transcript level"/>
<comment type="function">
    <text evidence="6">Polymerizes chitin, a structural polymer of the cell wall and septum, by transferring the sugar moiety of UDP-GlcNAc to the non-reducing end of the growing chitin polymer (PubMed:16278457). Produces a large proportion of the chitin that is not deacetylated to chitosan (PubMed:16278457).</text>
</comment>
<comment type="catalytic activity">
    <reaction evidence="1">
        <text>[(1-&gt;4)-N-acetyl-beta-D-glucosaminyl](n) + UDP-N-acetyl-alpha-D-glucosamine = [(1-&gt;4)-N-acetyl-beta-D-glucosaminyl](n+1) + UDP + H(+)</text>
        <dbReference type="Rhea" id="RHEA:16637"/>
        <dbReference type="Rhea" id="RHEA-COMP:9593"/>
        <dbReference type="Rhea" id="RHEA-COMP:9595"/>
        <dbReference type="ChEBI" id="CHEBI:15378"/>
        <dbReference type="ChEBI" id="CHEBI:17029"/>
        <dbReference type="ChEBI" id="CHEBI:57705"/>
        <dbReference type="ChEBI" id="CHEBI:58223"/>
        <dbReference type="EC" id="2.4.1.16"/>
    </reaction>
</comment>
<comment type="subcellular location">
    <subcellularLocation>
        <location evidence="10">Cell membrane</location>
        <topology evidence="2">Multi-pass membrane protein</topology>
    </subcellularLocation>
</comment>
<comment type="induction">
    <text evidence="7">Induced by the antifungal agent caspofungin.</text>
</comment>
<comment type="disruption phenotype">
    <text evidence="6 8">Decreases cellular chitin level (PubMed:16278457). Decreases capsular diameter (PubMed:32743128). Increases extracellular vesicle secretion (PubMed:32743128).</text>
</comment>
<comment type="similarity">
    <text evidence="10">Belongs to the chitin synthase family.</text>
</comment>
<evidence type="ECO:0000250" key="1">
    <source>
        <dbReference type="UniProtKB" id="P29465"/>
    </source>
</evidence>
<evidence type="ECO:0000255" key="2"/>
<evidence type="ECO:0000255" key="3">
    <source>
        <dbReference type="PROSITE-ProRule" id="PRU00498"/>
    </source>
</evidence>
<evidence type="ECO:0000255" key="4">
    <source>
        <dbReference type="PROSITE-ProRule" id="PRU01342"/>
    </source>
</evidence>
<evidence type="ECO:0000256" key="5">
    <source>
        <dbReference type="SAM" id="MobiDB-lite"/>
    </source>
</evidence>
<evidence type="ECO:0000269" key="6">
    <source>
    </source>
</evidence>
<evidence type="ECO:0000269" key="7">
    <source>
    </source>
</evidence>
<evidence type="ECO:0000269" key="8">
    <source>
    </source>
</evidence>
<evidence type="ECO:0000303" key="9">
    <source>
    </source>
</evidence>
<evidence type="ECO:0000305" key="10"/>
<evidence type="ECO:0000305" key="11">
    <source>
    </source>
</evidence>
<protein>
    <recommendedName>
        <fullName evidence="9">Chitin synthase 4</fullName>
        <ecNumber evidence="11">2.4.1.16</ecNumber>
    </recommendedName>
    <alternativeName>
        <fullName evidence="10">Chitin-UDP acetyl-glucosaminyl transferase 4</fullName>
    </alternativeName>
    <alternativeName>
        <fullName evidence="9">Class-V chitin synthase 4</fullName>
    </alternativeName>
</protein>
<sequence>MPPTSSQAPFHRYSHLDQRSAPDTQESSPADGNHDPRRQSTSFDHPNLYAQRDVFAVPNHPQSTNLNHQPYLHQGRSGSFEEPIYETPQPGHNVGYEDAEPYGHEQHDGTMWSERPSYSAPYDSDIKAPLDPTPYTPDLEADGMVVKEKKVHATEVMATTNARRWWIRITWMMTWWIPSFLLVHLGRMKRADVRMAWREKLAIFMMICLACAVVLFYIIFFGKLLCPDSDKAWNEKELATHQGDDDYYAAIAGKVYDFTNFYKAQHSDLSSYTTSSALMLEFAGQDLTNYFPMPMTVACPNLVTSTDLTLMYSNFTPIVQYAVHTSGPLQTGTDTKLNDINWYTDTLNPALEDYYKGYYVYDKSSIASGADSDSKYWAIYNNKVYDLSNYIYTISYYSSSSGTDLPNYSFLNSDITDLFQTSAGQDITKDMDEKLSALTAEDAANQMTCLNNAFYLGELDFRKTPRCTVQNYLLLAFSIILIATIASKFLAALQLGSKRQPELLDKFVICQVPCYTEGEESLKRTIDSLAALNYDDKRKLIFIICDGNIVGSGNNRPTPRIVLDLLGVDDKLEAEPLLFKSIGEGSKQLNYGKVYSGLYEFEGHVVPYIVVVKVGKPSEISKPGNRGKRDSQVLLMQYLNRVHFDAPMTPLELEIYHQMRNVIGIDPAFYEYIFQVDADTSVTPDSLNRLIACTADDQQIIGICGETKLANENESLTTMIQVYEYYISHHLTKAFESLFGSVTCLPGCFSVYRIRTAEGGRPVIISSVVIDEYAEPNVDTLHKKNLFSLGEDRYLTTLMMKNFPTFKMKFTPDAIAHTVAPSKWSVLLSQRRRWINSTIHNLVELLFLPEMCGFCFFSMRWVVFLDLLGTIILPATCGYLIYLVIVVSTGKAAIPVISLAMIGATYGLQALIFILKREFMLIGWMLVYILAFPVWSVFLPIYSFWSMDDFSWGNTRKVIGEGNQKTVVIDDDEPFNEGMIPYRTFKEYEWNAWEAASLHSESPAPSEKSQRTTRTGQSYRPHPHSIRSPSFHSSASELPSKADYWRDSSPLGMGNESKRLHQVSSDPSMRGDKSFIRGSKPQVERVQSMAGMSMWGSGSVYDPYKQAMGGPGFLHPMMTGNSLASQATFYPPQTQYPMSMYGSPMMMPMGMPMMGLQYAGNASMAGGAAGPRGTMMTMGMGDQSRISSFSMGGPVAESGAGRLVGLSINEEKEVQDEEVLDKLKTWLSKQDLMSVTKRQTREAIYTLFPNAGLQNRAGWLNEQIDKILSES</sequence>
<accession>J9VF17</accession>
<name>CHS4_CRYNH</name>
<keyword id="KW-1003">Cell membrane</keyword>
<keyword id="KW-0961">Cell wall biogenesis/degradation</keyword>
<keyword id="KW-0325">Glycoprotein</keyword>
<keyword id="KW-0328">Glycosyltransferase</keyword>
<keyword id="KW-0472">Membrane</keyword>
<keyword id="KW-0808">Transferase</keyword>
<keyword id="KW-0812">Transmembrane</keyword>
<keyword id="KW-1133">Transmembrane helix</keyword>